<geneLocation type="plasmid">
    <name>IncHI2 pMER610</name>
</geneLocation>
<accession>P18778</accession>
<dbReference type="EMBL" id="M20238">
    <property type="status" value="NOT_ANNOTATED_CDS"/>
    <property type="molecule type" value="Genomic_DNA"/>
</dbReference>
<dbReference type="SMR" id="P18778"/>
<dbReference type="GO" id="GO:0046690">
    <property type="term" value="P:response to tellurium ion"/>
    <property type="evidence" value="ECO:0007669"/>
    <property type="project" value="UniProtKB-KW"/>
</dbReference>
<dbReference type="CDD" id="cd06974">
    <property type="entry name" value="TerD_like"/>
    <property type="match status" value="2"/>
</dbReference>
<dbReference type="Gene3D" id="2.60.60.30">
    <property type="entry name" value="sav2460 like domains"/>
    <property type="match status" value="2"/>
</dbReference>
<dbReference type="InterPro" id="IPR051324">
    <property type="entry name" value="Stress/Tellurium_Resist"/>
</dbReference>
<dbReference type="InterPro" id="IPR017115">
    <property type="entry name" value="Tellurite_resistance_TerA"/>
</dbReference>
<dbReference type="InterPro" id="IPR003325">
    <property type="entry name" value="TerD"/>
</dbReference>
<dbReference type="PANTHER" id="PTHR32097">
    <property type="entry name" value="CAMP-BINDING PROTEIN 1-RELATED"/>
    <property type="match status" value="1"/>
</dbReference>
<dbReference type="PANTHER" id="PTHR32097:SF3">
    <property type="entry name" value="TELLURITE RESISTANCE PROTEIN"/>
    <property type="match status" value="1"/>
</dbReference>
<dbReference type="Pfam" id="PF02342">
    <property type="entry name" value="TerD"/>
    <property type="match status" value="1"/>
</dbReference>
<dbReference type="PIRSF" id="PIRSF037118">
    <property type="entry name" value="Tellurite_resistance_TerA"/>
    <property type="match status" value="1"/>
</dbReference>
<name>TERA_ALCSP</name>
<organism>
    <name type="scientific">Alcaligenes sp</name>
    <dbReference type="NCBI Taxonomy" id="512"/>
    <lineage>
        <taxon>Bacteria</taxon>
        <taxon>Pseudomonadati</taxon>
        <taxon>Pseudomonadota</taxon>
        <taxon>Betaproteobacteria</taxon>
        <taxon>Burkholderiales</taxon>
        <taxon>Alcaligenaceae</taxon>
        <taxon>Alcaligenes</taxon>
    </lineage>
</organism>
<sequence>MVFYGQPRNEDGSISFSAEGTNSVFTVDLSRLKPDVQKVAFTVTCDGSHTVSSLNHLSIQIESGNTSLISGQVELSGRQEAALILGEVYRRNGDWKFVFIAQGFNGGLKPLAEYYGVNVADEPAPVTPPPAPPAPPKVSLSKVSLTKEKPAISLAKKANFGEIRINLNWHRGSGSGGLLGGMFGSNKAIDLDLGAFVELADGYKSVVQALGNAFGNYHSEPYVQMQGDDRTGEALDGEWLHINGREWKEIRQVLIYAFIYQGVPSWDKTDGVVTLHVPEQPPIESRLTEGDNKRTLCAIARLVNENGSIRVERINQYFRGQEEMDRAFGWGFRWSRGSK</sequence>
<gene>
    <name type="primary">terA</name>
</gene>
<keyword id="KW-0614">Plasmid</keyword>
<keyword id="KW-0778">Tellurium resistance</keyword>
<proteinExistence type="predicted"/>
<reference key="1">
    <citation type="journal article" date="1988" name="Gene">
        <title>The nucleotide sequence of a plasmid determinant for resistance to tellurium anions.</title>
        <authorList>
            <person name="Jobling M.G."/>
            <person name="Ritchie D.A."/>
        </authorList>
    </citation>
    <scope>NUCLEOTIDE SEQUENCE [GENOMIC DNA]</scope>
</reference>
<protein>
    <recommendedName>
        <fullName>Tellurium resistance protein TerA</fullName>
    </recommendedName>
</protein>
<comment type="function">
    <text>Not yet known.</text>
</comment>
<feature type="chain" id="PRO_0000072485" description="Tellurium resistance protein TerA">
    <location>
        <begin position="1"/>
        <end position="339"/>
    </location>
</feature>